<organism>
    <name type="scientific">Synechococcus sp. (strain ATCC 27144 / PCC 6301 / SAUG 1402/1)</name>
    <name type="common">Anacystis nidulans</name>
    <dbReference type="NCBI Taxonomy" id="269084"/>
    <lineage>
        <taxon>Bacteria</taxon>
        <taxon>Bacillati</taxon>
        <taxon>Cyanobacteriota</taxon>
        <taxon>Cyanophyceae</taxon>
        <taxon>Synechococcales</taxon>
        <taxon>Synechococcaceae</taxon>
        <taxon>Synechococcus</taxon>
    </lineage>
</organism>
<comment type="function">
    <text evidence="1">Specifically dimethylates two adjacent adenosines (A1518 and A1519) in the loop of a conserved hairpin near the 3'-end of 16S rRNA in the 30S particle. May play a critical role in biogenesis of 30S subunits.</text>
</comment>
<comment type="catalytic activity">
    <reaction evidence="1">
        <text>adenosine(1518)/adenosine(1519) in 16S rRNA + 4 S-adenosyl-L-methionine = N(6)-dimethyladenosine(1518)/N(6)-dimethyladenosine(1519) in 16S rRNA + 4 S-adenosyl-L-homocysteine + 4 H(+)</text>
        <dbReference type="Rhea" id="RHEA:19609"/>
        <dbReference type="Rhea" id="RHEA-COMP:10232"/>
        <dbReference type="Rhea" id="RHEA-COMP:10233"/>
        <dbReference type="ChEBI" id="CHEBI:15378"/>
        <dbReference type="ChEBI" id="CHEBI:57856"/>
        <dbReference type="ChEBI" id="CHEBI:59789"/>
        <dbReference type="ChEBI" id="CHEBI:74411"/>
        <dbReference type="ChEBI" id="CHEBI:74493"/>
        <dbReference type="EC" id="2.1.1.182"/>
    </reaction>
</comment>
<comment type="subcellular location">
    <subcellularLocation>
        <location evidence="1">Cytoplasm</location>
    </subcellularLocation>
</comment>
<comment type="similarity">
    <text evidence="1">Belongs to the class I-like SAM-binding methyltransferase superfamily. rRNA adenine N(6)-methyltransferase family. RsmA subfamily.</text>
</comment>
<gene>
    <name evidence="1" type="primary">rsmA</name>
    <name evidence="1" type="synonym">ksgA</name>
    <name type="ordered locus">syc1202_d</name>
</gene>
<keyword id="KW-0963">Cytoplasm</keyword>
<keyword id="KW-0489">Methyltransferase</keyword>
<keyword id="KW-0694">RNA-binding</keyword>
<keyword id="KW-0698">rRNA processing</keyword>
<keyword id="KW-0949">S-adenosyl-L-methionine</keyword>
<keyword id="KW-0808">Transferase</keyword>
<evidence type="ECO:0000255" key="1">
    <source>
        <dbReference type="HAMAP-Rule" id="MF_00607"/>
    </source>
</evidence>
<feature type="chain" id="PRO_0000101626" description="Ribosomal RNA small subunit methyltransferase A">
    <location>
        <begin position="1"/>
        <end position="279"/>
    </location>
</feature>
<feature type="binding site" evidence="1">
    <location>
        <position position="10"/>
    </location>
    <ligand>
        <name>S-adenosyl-L-methionine</name>
        <dbReference type="ChEBI" id="CHEBI:59789"/>
    </ligand>
</feature>
<feature type="binding site" evidence="1">
    <location>
        <position position="12"/>
    </location>
    <ligand>
        <name>S-adenosyl-L-methionine</name>
        <dbReference type="ChEBI" id="CHEBI:59789"/>
    </ligand>
</feature>
<feature type="binding site" evidence="1">
    <location>
        <position position="37"/>
    </location>
    <ligand>
        <name>S-adenosyl-L-methionine</name>
        <dbReference type="ChEBI" id="CHEBI:59789"/>
    </ligand>
</feature>
<feature type="binding site" evidence="1">
    <location>
        <position position="58"/>
    </location>
    <ligand>
        <name>S-adenosyl-L-methionine</name>
        <dbReference type="ChEBI" id="CHEBI:59789"/>
    </ligand>
</feature>
<feature type="binding site" evidence="1">
    <location>
        <position position="83"/>
    </location>
    <ligand>
        <name>S-adenosyl-L-methionine</name>
        <dbReference type="ChEBI" id="CHEBI:59789"/>
    </ligand>
</feature>
<feature type="binding site" evidence="1">
    <location>
        <position position="108"/>
    </location>
    <ligand>
        <name>S-adenosyl-L-methionine</name>
        <dbReference type="ChEBI" id="CHEBI:59789"/>
    </ligand>
</feature>
<dbReference type="EC" id="2.1.1.182" evidence="1"/>
<dbReference type="EMBL" id="AP008231">
    <property type="protein sequence ID" value="BAD79392.1"/>
    <property type="molecule type" value="Genomic_DNA"/>
</dbReference>
<dbReference type="RefSeq" id="WP_011243514.1">
    <property type="nucleotide sequence ID" value="NZ_CP085785.1"/>
</dbReference>
<dbReference type="SMR" id="Q5N2S8"/>
<dbReference type="GeneID" id="72429127"/>
<dbReference type="KEGG" id="syc:syc1202_d"/>
<dbReference type="eggNOG" id="COG0030">
    <property type="taxonomic scope" value="Bacteria"/>
</dbReference>
<dbReference type="Proteomes" id="UP000001175">
    <property type="component" value="Chromosome"/>
</dbReference>
<dbReference type="GO" id="GO:0005829">
    <property type="term" value="C:cytosol"/>
    <property type="evidence" value="ECO:0007669"/>
    <property type="project" value="TreeGrafter"/>
</dbReference>
<dbReference type="GO" id="GO:0052908">
    <property type="term" value="F:16S rRNA (adenine(1518)-N(6)/adenine(1519)-N(6))-dimethyltransferase activity"/>
    <property type="evidence" value="ECO:0007669"/>
    <property type="project" value="UniProtKB-EC"/>
</dbReference>
<dbReference type="GO" id="GO:0003723">
    <property type="term" value="F:RNA binding"/>
    <property type="evidence" value="ECO:0007669"/>
    <property type="project" value="UniProtKB-KW"/>
</dbReference>
<dbReference type="CDD" id="cd02440">
    <property type="entry name" value="AdoMet_MTases"/>
    <property type="match status" value="1"/>
</dbReference>
<dbReference type="FunFam" id="3.40.50.150:FF:000023">
    <property type="entry name" value="Ribosomal RNA small subunit methyltransferase A"/>
    <property type="match status" value="1"/>
</dbReference>
<dbReference type="Gene3D" id="1.10.8.100">
    <property type="entry name" value="Ribosomal RNA adenine dimethylase-like, domain 2"/>
    <property type="match status" value="1"/>
</dbReference>
<dbReference type="Gene3D" id="3.40.50.150">
    <property type="entry name" value="Vaccinia Virus protein VP39"/>
    <property type="match status" value="1"/>
</dbReference>
<dbReference type="HAMAP" id="MF_00607">
    <property type="entry name" value="16SrRNA_methyltr_A"/>
    <property type="match status" value="1"/>
</dbReference>
<dbReference type="InterPro" id="IPR001737">
    <property type="entry name" value="KsgA/Erm"/>
</dbReference>
<dbReference type="InterPro" id="IPR023165">
    <property type="entry name" value="rRNA_Ade_diMease-like_C"/>
</dbReference>
<dbReference type="InterPro" id="IPR020596">
    <property type="entry name" value="rRNA_Ade_Mease_Trfase_CS"/>
</dbReference>
<dbReference type="InterPro" id="IPR020598">
    <property type="entry name" value="rRNA_Ade_methylase_Trfase_N"/>
</dbReference>
<dbReference type="InterPro" id="IPR011530">
    <property type="entry name" value="rRNA_adenine_dimethylase"/>
</dbReference>
<dbReference type="InterPro" id="IPR029063">
    <property type="entry name" value="SAM-dependent_MTases_sf"/>
</dbReference>
<dbReference type="NCBIfam" id="TIGR00755">
    <property type="entry name" value="ksgA"/>
    <property type="match status" value="1"/>
</dbReference>
<dbReference type="PANTHER" id="PTHR11727">
    <property type="entry name" value="DIMETHYLADENOSINE TRANSFERASE"/>
    <property type="match status" value="1"/>
</dbReference>
<dbReference type="PANTHER" id="PTHR11727:SF7">
    <property type="entry name" value="DIMETHYLADENOSINE TRANSFERASE-RELATED"/>
    <property type="match status" value="1"/>
</dbReference>
<dbReference type="Pfam" id="PF00398">
    <property type="entry name" value="RrnaAD"/>
    <property type="match status" value="1"/>
</dbReference>
<dbReference type="SMART" id="SM00650">
    <property type="entry name" value="rADc"/>
    <property type="match status" value="1"/>
</dbReference>
<dbReference type="SUPFAM" id="SSF53335">
    <property type="entry name" value="S-adenosyl-L-methionine-dependent methyltransferases"/>
    <property type="match status" value="1"/>
</dbReference>
<dbReference type="PROSITE" id="PS01131">
    <property type="entry name" value="RRNA_A_DIMETH"/>
    <property type="match status" value="1"/>
</dbReference>
<dbReference type="PROSITE" id="PS51689">
    <property type="entry name" value="SAM_RNA_A_N6_MT"/>
    <property type="match status" value="1"/>
</dbReference>
<name>RSMA_SYNP6</name>
<reference key="1">
    <citation type="journal article" date="2007" name="Photosyn. Res.">
        <title>Complete nucleotide sequence of the freshwater unicellular cyanobacterium Synechococcus elongatus PCC 6301 chromosome: gene content and organization.</title>
        <authorList>
            <person name="Sugita C."/>
            <person name="Ogata K."/>
            <person name="Shikata M."/>
            <person name="Jikuya H."/>
            <person name="Takano J."/>
            <person name="Furumichi M."/>
            <person name="Kanehisa M."/>
            <person name="Omata T."/>
            <person name="Sugiura M."/>
            <person name="Sugita M."/>
        </authorList>
    </citation>
    <scope>NUCLEOTIDE SEQUENCE [LARGE SCALE GENOMIC DNA]</scope>
    <source>
        <strain>ATCC 27144 / PCC 6301 / SAUG 1402/1</strain>
    </source>
</reference>
<protein>
    <recommendedName>
        <fullName evidence="1">Ribosomal RNA small subunit methyltransferase A</fullName>
        <ecNumber evidence="1">2.1.1.182</ecNumber>
    </recommendedName>
    <alternativeName>
        <fullName evidence="1">16S rRNA (adenine(1518)-N(6)/adenine(1519)-N(6))-dimethyltransferase</fullName>
    </alternativeName>
    <alternativeName>
        <fullName evidence="1">16S rRNA dimethyladenosine transferase</fullName>
    </alternativeName>
    <alternativeName>
        <fullName evidence="1">16S rRNA dimethylase</fullName>
    </alternativeName>
    <alternativeName>
        <fullName evidence="1">S-adenosylmethionine-6-N', N'-adenosyl(rRNA) dimethyltransferase</fullName>
    </alternativeName>
</protein>
<sequence length="279" mass="30688">MPARKRFGQHWLRSEAILDRIVAAAELRPSDRVLEIGPGRGALTQRLLAAVDGLVAVELDRDLIGQLQQRFGQAENFCLLEGDILQLDWTAAIADRPRFANPSKVVANIPYNITGPILQSLLGTIAQPRRPAFERLVLLVQQEVADRLCATPGQRAYGALSVRVQYLASCERVCAVPPKSFSPPPKVQSTVICLKPRPWPQVCNNPGRLEKLLNQGFSAKRKMLRNNLKSLYSSEQIEAAFAAHQIAPEARAETLSIDQWIGLCTDLGDPTDSAINPTA</sequence>
<proteinExistence type="inferred from homology"/>
<accession>Q5N2S8</accession>